<accession>Q1CHL1</accession>
<accession>C4GU70</accession>
<organism>
    <name type="scientific">Yersinia pestis bv. Antiqua (strain Nepal516)</name>
    <dbReference type="NCBI Taxonomy" id="377628"/>
    <lineage>
        <taxon>Bacteria</taxon>
        <taxon>Pseudomonadati</taxon>
        <taxon>Pseudomonadota</taxon>
        <taxon>Gammaproteobacteria</taxon>
        <taxon>Enterobacterales</taxon>
        <taxon>Yersiniaceae</taxon>
        <taxon>Yersinia</taxon>
    </lineage>
</organism>
<gene>
    <name evidence="1" type="primary">mnmC</name>
    <name type="ordered locus">YPN_2190</name>
    <name type="ORF">YP516_2454</name>
</gene>
<feature type="chain" id="PRO_1000065016" description="tRNA 5-methylaminomethyl-2-thiouridine biosynthesis bifunctional protein MnmC">
    <location>
        <begin position="1"/>
        <end position="689"/>
    </location>
</feature>
<feature type="region of interest" description="tRNA (mnm(5)s(2)U34)-methyltransferase">
    <location>
        <begin position="1"/>
        <end position="245"/>
    </location>
</feature>
<feature type="region of interest" description="FAD-dependent cmnm(5)s(2)U34 oxidoreductase">
    <location>
        <begin position="270"/>
        <end position="689"/>
    </location>
</feature>
<comment type="function">
    <text evidence="1">Catalyzes the last two steps in the biosynthesis of 5-methylaminomethyl-2-thiouridine (mnm(5)s(2)U) at the wobble position (U34) in tRNA. Catalyzes the FAD-dependent demodification of cmnm(5)s(2)U34 to nm(5)s(2)U34, followed by the transfer of a methyl group from S-adenosyl-L-methionine to nm(5)s(2)U34, to form mnm(5)s(2)U34.</text>
</comment>
<comment type="catalytic activity">
    <reaction evidence="1">
        <text>5-aminomethyl-2-thiouridine(34) in tRNA + S-adenosyl-L-methionine = 5-methylaminomethyl-2-thiouridine(34) in tRNA + S-adenosyl-L-homocysteine + H(+)</text>
        <dbReference type="Rhea" id="RHEA:19569"/>
        <dbReference type="Rhea" id="RHEA-COMP:10195"/>
        <dbReference type="Rhea" id="RHEA-COMP:10197"/>
        <dbReference type="ChEBI" id="CHEBI:15378"/>
        <dbReference type="ChEBI" id="CHEBI:57856"/>
        <dbReference type="ChEBI" id="CHEBI:59789"/>
        <dbReference type="ChEBI" id="CHEBI:74454"/>
        <dbReference type="ChEBI" id="CHEBI:74455"/>
        <dbReference type="EC" id="2.1.1.61"/>
    </reaction>
</comment>
<comment type="cofactor">
    <cofactor evidence="1">
        <name>FAD</name>
        <dbReference type="ChEBI" id="CHEBI:57692"/>
    </cofactor>
</comment>
<comment type="subcellular location">
    <subcellularLocation>
        <location evidence="1">Cytoplasm</location>
    </subcellularLocation>
</comment>
<comment type="similarity">
    <text evidence="1">In the N-terminal section; belongs to the methyltransferase superfamily. tRNA (mnm(5)s(2)U34)-methyltransferase family.</text>
</comment>
<comment type="similarity">
    <text evidence="1">In the C-terminal section; belongs to the DAO family.</text>
</comment>
<protein>
    <recommendedName>
        <fullName evidence="1">tRNA 5-methylaminomethyl-2-thiouridine biosynthesis bifunctional protein MnmC</fullName>
        <shortName evidence="1">tRNA mnm(5)s(2)U biosynthesis bifunctional protein</shortName>
    </recommendedName>
    <domain>
        <recommendedName>
            <fullName evidence="1">tRNA (mnm(5)s(2)U34)-methyltransferase</fullName>
            <ecNumber evidence="1">2.1.1.61</ecNumber>
        </recommendedName>
    </domain>
    <domain>
        <recommendedName>
            <fullName evidence="1">FAD-dependent cmnm(5)s(2)U34 oxidoreductase</fullName>
            <ecNumber evidence="1">1.5.-.-</ecNumber>
        </recommendedName>
    </domain>
</protein>
<reference key="1">
    <citation type="journal article" date="2006" name="J. Bacteriol.">
        <title>Complete genome sequence of Yersinia pestis strains Antiqua and Nepal516: evidence of gene reduction in an emerging pathogen.</title>
        <authorList>
            <person name="Chain P.S.G."/>
            <person name="Hu P."/>
            <person name="Malfatti S.A."/>
            <person name="Radnedge L."/>
            <person name="Larimer F."/>
            <person name="Vergez L.M."/>
            <person name="Worsham P."/>
            <person name="Chu M.C."/>
            <person name="Andersen G.L."/>
        </authorList>
    </citation>
    <scope>NUCLEOTIDE SEQUENCE [LARGE SCALE GENOMIC DNA]</scope>
    <source>
        <strain>Nepal516</strain>
    </source>
</reference>
<reference key="2">
    <citation type="submission" date="2009-04" db="EMBL/GenBank/DDBJ databases">
        <title>Yersinia pestis Nepal516A whole genome shotgun sequencing project.</title>
        <authorList>
            <person name="Plunkett G. III"/>
            <person name="Anderson B.D."/>
            <person name="Baumler D.J."/>
            <person name="Burland V."/>
            <person name="Cabot E.L."/>
            <person name="Glasner J.D."/>
            <person name="Mau B."/>
            <person name="Neeno-Eckwall E."/>
            <person name="Perna N.T."/>
            <person name="Munk A.C."/>
            <person name="Tapia R."/>
            <person name="Green L.D."/>
            <person name="Rogers Y.C."/>
            <person name="Detter J.C."/>
            <person name="Bruce D.C."/>
            <person name="Brettin T.S."/>
        </authorList>
    </citation>
    <scope>NUCLEOTIDE SEQUENCE [LARGE SCALE GENOMIC DNA]</scope>
    <source>
        <strain>Nepal516</strain>
    </source>
</reference>
<evidence type="ECO:0000255" key="1">
    <source>
        <dbReference type="HAMAP-Rule" id="MF_01102"/>
    </source>
</evidence>
<name>MNMC_YERPN</name>
<proteinExistence type="inferred from homology"/>
<keyword id="KW-0963">Cytoplasm</keyword>
<keyword id="KW-0274">FAD</keyword>
<keyword id="KW-0285">Flavoprotein</keyword>
<keyword id="KW-0489">Methyltransferase</keyword>
<keyword id="KW-0511">Multifunctional enzyme</keyword>
<keyword id="KW-0560">Oxidoreductase</keyword>
<keyword id="KW-0949">S-adenosyl-L-methionine</keyword>
<keyword id="KW-0808">Transferase</keyword>
<keyword id="KW-0819">tRNA processing</keyword>
<dbReference type="EC" id="2.1.1.61" evidence="1"/>
<dbReference type="EC" id="1.5.-.-" evidence="1"/>
<dbReference type="EMBL" id="CP000305">
    <property type="protein sequence ID" value="ABG18519.1"/>
    <property type="molecule type" value="Genomic_DNA"/>
</dbReference>
<dbReference type="EMBL" id="ACNQ01000013">
    <property type="protein sequence ID" value="EEO76257.1"/>
    <property type="molecule type" value="Genomic_DNA"/>
</dbReference>
<dbReference type="RefSeq" id="WP_002209716.1">
    <property type="nucleotide sequence ID" value="NZ_ACNQ01000013.1"/>
</dbReference>
<dbReference type="SMR" id="Q1CHL1"/>
<dbReference type="GeneID" id="57975933"/>
<dbReference type="KEGG" id="ypn:YPN_2190"/>
<dbReference type="HOGENOM" id="CLU_022427_2_1_6"/>
<dbReference type="Proteomes" id="UP000008936">
    <property type="component" value="Chromosome"/>
</dbReference>
<dbReference type="GO" id="GO:0005737">
    <property type="term" value="C:cytoplasm"/>
    <property type="evidence" value="ECO:0007669"/>
    <property type="project" value="UniProtKB-SubCell"/>
</dbReference>
<dbReference type="GO" id="GO:0050660">
    <property type="term" value="F:flavin adenine dinucleotide binding"/>
    <property type="evidence" value="ECO:0007669"/>
    <property type="project" value="UniProtKB-UniRule"/>
</dbReference>
<dbReference type="GO" id="GO:0016645">
    <property type="term" value="F:oxidoreductase activity, acting on the CH-NH group of donors"/>
    <property type="evidence" value="ECO:0007669"/>
    <property type="project" value="InterPro"/>
</dbReference>
<dbReference type="GO" id="GO:0004808">
    <property type="term" value="F:tRNA (5-methylaminomethyl-2-thiouridylate)(34)-methyltransferase activity"/>
    <property type="evidence" value="ECO:0007669"/>
    <property type="project" value="UniProtKB-EC"/>
</dbReference>
<dbReference type="GO" id="GO:0032259">
    <property type="term" value="P:methylation"/>
    <property type="evidence" value="ECO:0007669"/>
    <property type="project" value="UniProtKB-KW"/>
</dbReference>
<dbReference type="GO" id="GO:0002098">
    <property type="term" value="P:tRNA wobble uridine modification"/>
    <property type="evidence" value="ECO:0007669"/>
    <property type="project" value="TreeGrafter"/>
</dbReference>
<dbReference type="FunFam" id="3.40.50.150:FF:000107">
    <property type="entry name" value="tRNA 5-methylaminomethyl-2-thiouridine biosynthesis bifunctional protein MnmC"/>
    <property type="match status" value="1"/>
</dbReference>
<dbReference type="Gene3D" id="3.30.9.10">
    <property type="entry name" value="D-Amino Acid Oxidase, subunit A, domain 2"/>
    <property type="match status" value="1"/>
</dbReference>
<dbReference type="Gene3D" id="3.50.50.60">
    <property type="entry name" value="FAD/NAD(P)-binding domain"/>
    <property type="match status" value="1"/>
</dbReference>
<dbReference type="Gene3D" id="3.40.50.150">
    <property type="entry name" value="Vaccinia Virus protein VP39"/>
    <property type="match status" value="1"/>
</dbReference>
<dbReference type="HAMAP" id="MF_01102">
    <property type="entry name" value="MnmC"/>
    <property type="match status" value="1"/>
</dbReference>
<dbReference type="InterPro" id="IPR006076">
    <property type="entry name" value="FAD-dep_OxRdtase"/>
</dbReference>
<dbReference type="InterPro" id="IPR036188">
    <property type="entry name" value="FAD/NAD-bd_sf"/>
</dbReference>
<dbReference type="InterPro" id="IPR008471">
    <property type="entry name" value="MnmC-like_methylTransf"/>
</dbReference>
<dbReference type="InterPro" id="IPR029063">
    <property type="entry name" value="SAM-dependent_MTases_sf"/>
</dbReference>
<dbReference type="InterPro" id="IPR023032">
    <property type="entry name" value="tRNA_MAMT_biosynth_bifunc_MnmC"/>
</dbReference>
<dbReference type="InterPro" id="IPR047785">
    <property type="entry name" value="tRNA_MNMC2"/>
</dbReference>
<dbReference type="InterPro" id="IPR017610">
    <property type="entry name" value="tRNA_S-uridine_synth_MnmC_C"/>
</dbReference>
<dbReference type="NCBIfam" id="TIGR03197">
    <property type="entry name" value="MnmC_Cterm"/>
    <property type="match status" value="1"/>
</dbReference>
<dbReference type="NCBIfam" id="NF002481">
    <property type="entry name" value="PRK01747.1-2"/>
    <property type="match status" value="1"/>
</dbReference>
<dbReference type="NCBIfam" id="NF002482">
    <property type="entry name" value="PRK01747.1-3"/>
    <property type="match status" value="1"/>
</dbReference>
<dbReference type="NCBIfam" id="NF002484">
    <property type="entry name" value="PRK01747.1-5"/>
    <property type="match status" value="1"/>
</dbReference>
<dbReference type="NCBIfam" id="NF033855">
    <property type="entry name" value="tRNA_MNMC2"/>
    <property type="match status" value="1"/>
</dbReference>
<dbReference type="PANTHER" id="PTHR13847">
    <property type="entry name" value="SARCOSINE DEHYDROGENASE-RELATED"/>
    <property type="match status" value="1"/>
</dbReference>
<dbReference type="PANTHER" id="PTHR13847:SF283">
    <property type="entry name" value="TRNA 5-METHYLAMINOMETHYL-2-THIOURIDINE BIOSYNTHESIS BIFUNCTIONAL PROTEIN MNMC"/>
    <property type="match status" value="1"/>
</dbReference>
<dbReference type="Pfam" id="PF01266">
    <property type="entry name" value="DAO"/>
    <property type="match status" value="1"/>
</dbReference>
<dbReference type="Pfam" id="PF05430">
    <property type="entry name" value="Methyltransf_30"/>
    <property type="match status" value="1"/>
</dbReference>
<dbReference type="SUPFAM" id="SSF51905">
    <property type="entry name" value="FAD/NAD(P)-binding domain"/>
    <property type="match status" value="1"/>
</dbReference>
<dbReference type="SUPFAM" id="SSF53335">
    <property type="entry name" value="S-adenosyl-L-methionine-dependent methyltransferases"/>
    <property type="match status" value="1"/>
</dbReference>
<sequence>MNQRPIQTATLSWNEQGTPVSEQFGDIYFSNEDGLEETHHVFLKGNGFPARFASHPQQSCIFAETGFGTGLNFLTLWRDFALFRQQSPNATLRRLHYISFEKYPLHVADLASAHARWPELASFAEQLRAQWPLPLAGCHRILLADGAITLDLWFGDVNTLLPTLDDSLNNQVDAWFLDGFAPAKNPDMWNEQLFNAMARMTRPGGTFSTFTAAGFVRRGLQQAGFNVTKVKGFGQKREMLTGTLPQQIHAPTAPWYHRPAATRCDDIAIIGGGIVSALTALALQRRGAVVTLYCADAQPAQGASGNRQGALYPLLNGKNDALETFFTSAFTFARRQYDQLLEQGIAFDHQWCGVSQLAFDDKSRGKIEKMLHTQWPVEFAEAMSREQLSELAGLDCAHDGIHYPAGGWLCPSDLTHALMMLAQQNGMTCHYQHELQRLKRIDSQWQLTFGQSQAAKHHATVILATGHRLPEWEQTHHLPLSAVRGQVSHIPTTPVLSQLQQVLCYDGYLTPVNPANQHHCIGASYQRGDIATDFRLTEQQENRERLLRCLPQVSWPQQVDVSDNQARCGVRCAIRDHLPMVGAVPDYAATLAQYQDLSRRIQHGGESEVNDIAVAPVWPELFMVGGLGSRGLCSAPLVAEILAAQMFGEPLPLDAKTLAALNPNRFWIRKLLKGRPVQTRSPATQESSR</sequence>